<evidence type="ECO:0000255" key="1">
    <source>
        <dbReference type="HAMAP-Rule" id="MF_00176"/>
    </source>
</evidence>
<organism>
    <name type="scientific">Geotalea uraniireducens (strain Rf4)</name>
    <name type="common">Geobacter uraniireducens</name>
    <dbReference type="NCBI Taxonomy" id="351605"/>
    <lineage>
        <taxon>Bacteria</taxon>
        <taxon>Pseudomonadati</taxon>
        <taxon>Thermodesulfobacteriota</taxon>
        <taxon>Desulfuromonadia</taxon>
        <taxon>Geobacterales</taxon>
        <taxon>Geobacteraceae</taxon>
        <taxon>Geotalea</taxon>
    </lineage>
</organism>
<feature type="chain" id="PRO_1000077198" description="Serine--tRNA ligase">
    <location>
        <begin position="1"/>
        <end position="422"/>
    </location>
</feature>
<feature type="binding site" evidence="1">
    <location>
        <begin position="229"/>
        <end position="231"/>
    </location>
    <ligand>
        <name>L-serine</name>
        <dbReference type="ChEBI" id="CHEBI:33384"/>
    </ligand>
</feature>
<feature type="binding site" evidence="1">
    <location>
        <begin position="260"/>
        <end position="262"/>
    </location>
    <ligand>
        <name>ATP</name>
        <dbReference type="ChEBI" id="CHEBI:30616"/>
    </ligand>
</feature>
<feature type="binding site" evidence="1">
    <location>
        <position position="283"/>
    </location>
    <ligand>
        <name>L-serine</name>
        <dbReference type="ChEBI" id="CHEBI:33384"/>
    </ligand>
</feature>
<feature type="binding site" evidence="1">
    <location>
        <begin position="347"/>
        <end position="350"/>
    </location>
    <ligand>
        <name>ATP</name>
        <dbReference type="ChEBI" id="CHEBI:30616"/>
    </ligand>
</feature>
<feature type="binding site" evidence="1">
    <location>
        <position position="383"/>
    </location>
    <ligand>
        <name>L-serine</name>
        <dbReference type="ChEBI" id="CHEBI:33384"/>
    </ligand>
</feature>
<reference key="1">
    <citation type="submission" date="2007-05" db="EMBL/GenBank/DDBJ databases">
        <title>Complete sequence of Geobacter uraniireducens Rf4.</title>
        <authorList>
            <consortium name="US DOE Joint Genome Institute"/>
            <person name="Copeland A."/>
            <person name="Lucas S."/>
            <person name="Lapidus A."/>
            <person name="Barry K."/>
            <person name="Detter J.C."/>
            <person name="Glavina del Rio T."/>
            <person name="Hammon N."/>
            <person name="Israni S."/>
            <person name="Dalin E."/>
            <person name="Tice H."/>
            <person name="Pitluck S."/>
            <person name="Chertkov O."/>
            <person name="Brettin T."/>
            <person name="Bruce D."/>
            <person name="Han C."/>
            <person name="Schmutz J."/>
            <person name="Larimer F."/>
            <person name="Land M."/>
            <person name="Hauser L."/>
            <person name="Kyrpides N."/>
            <person name="Mikhailova N."/>
            <person name="Shelobolina E."/>
            <person name="Aklujkar M."/>
            <person name="Lovley D."/>
            <person name="Richardson P."/>
        </authorList>
    </citation>
    <scope>NUCLEOTIDE SEQUENCE [LARGE SCALE GENOMIC DNA]</scope>
    <source>
        <strain>ATCC BAA-1134 / JCM 13001 / Rf4</strain>
    </source>
</reference>
<proteinExistence type="inferred from homology"/>
<accession>A5GD47</accession>
<sequence length="422" mass="47994">MLDARYLRENLETVEARLKTRGAGVDLERFRQLDGSRRELLQQTETLKALRNKVSDEISRIKDKSQAQDRIIEMREVSQRIKGLDEELKGVEEALEYFLLTVPNIPCAATPVGASEVDNVEVKKWGEKPVFDFAPKPHWEIGESLDILDFERGAKLAGARFTLYKGFGARLERALINFMLDLHTERHKYLEMLPPFMVNRESMTGTGQLPKFEEDLFHMEGVDYFLIPTAEVPVTNIHRGEILKAADLPLCYTAYTPCFRKEAGSYGKDTRGLIRQHQFNKVELVKFVHPAHSYNELDKLLDNAEEVLRLLGLPYRVVDLCTADIGFSAARTYDIEVWLPGQDCYREISSCSNFEDFQARRASIRFREDEKAKPEFVHTLNGSGLAVGRTLVAILENYQEADGSVSIPGALRPYMGGIEKIA</sequence>
<keyword id="KW-0030">Aminoacyl-tRNA synthetase</keyword>
<keyword id="KW-0067">ATP-binding</keyword>
<keyword id="KW-0963">Cytoplasm</keyword>
<keyword id="KW-0436">Ligase</keyword>
<keyword id="KW-0547">Nucleotide-binding</keyword>
<keyword id="KW-0648">Protein biosynthesis</keyword>
<keyword id="KW-1185">Reference proteome</keyword>
<dbReference type="EC" id="6.1.1.11" evidence="1"/>
<dbReference type="EMBL" id="CP000698">
    <property type="protein sequence ID" value="ABQ24503.1"/>
    <property type="molecule type" value="Genomic_DNA"/>
</dbReference>
<dbReference type="RefSeq" id="WP_011937230.1">
    <property type="nucleotide sequence ID" value="NC_009483.1"/>
</dbReference>
<dbReference type="SMR" id="A5GD47"/>
<dbReference type="STRING" id="351605.Gura_0287"/>
<dbReference type="KEGG" id="gur:Gura_0287"/>
<dbReference type="HOGENOM" id="CLU_023797_1_1_7"/>
<dbReference type="OrthoDB" id="9804647at2"/>
<dbReference type="UniPathway" id="UPA00906">
    <property type="reaction ID" value="UER00895"/>
</dbReference>
<dbReference type="Proteomes" id="UP000006695">
    <property type="component" value="Chromosome"/>
</dbReference>
<dbReference type="GO" id="GO:0005737">
    <property type="term" value="C:cytoplasm"/>
    <property type="evidence" value="ECO:0007669"/>
    <property type="project" value="UniProtKB-SubCell"/>
</dbReference>
<dbReference type="GO" id="GO:0005524">
    <property type="term" value="F:ATP binding"/>
    <property type="evidence" value="ECO:0007669"/>
    <property type="project" value="UniProtKB-UniRule"/>
</dbReference>
<dbReference type="GO" id="GO:0004828">
    <property type="term" value="F:serine-tRNA ligase activity"/>
    <property type="evidence" value="ECO:0007669"/>
    <property type="project" value="UniProtKB-UniRule"/>
</dbReference>
<dbReference type="GO" id="GO:0016260">
    <property type="term" value="P:selenocysteine biosynthetic process"/>
    <property type="evidence" value="ECO:0007669"/>
    <property type="project" value="UniProtKB-UniRule"/>
</dbReference>
<dbReference type="GO" id="GO:0006434">
    <property type="term" value="P:seryl-tRNA aminoacylation"/>
    <property type="evidence" value="ECO:0007669"/>
    <property type="project" value="UniProtKB-UniRule"/>
</dbReference>
<dbReference type="CDD" id="cd00770">
    <property type="entry name" value="SerRS_core"/>
    <property type="match status" value="1"/>
</dbReference>
<dbReference type="Gene3D" id="3.30.930.10">
    <property type="entry name" value="Bira Bifunctional Protein, Domain 2"/>
    <property type="match status" value="1"/>
</dbReference>
<dbReference type="Gene3D" id="1.10.287.40">
    <property type="entry name" value="Serine-tRNA synthetase, tRNA binding domain"/>
    <property type="match status" value="1"/>
</dbReference>
<dbReference type="HAMAP" id="MF_00176">
    <property type="entry name" value="Ser_tRNA_synth_type1"/>
    <property type="match status" value="1"/>
</dbReference>
<dbReference type="InterPro" id="IPR002314">
    <property type="entry name" value="aa-tRNA-synt_IIb"/>
</dbReference>
<dbReference type="InterPro" id="IPR006195">
    <property type="entry name" value="aa-tRNA-synth_II"/>
</dbReference>
<dbReference type="InterPro" id="IPR045864">
    <property type="entry name" value="aa-tRNA-synth_II/BPL/LPL"/>
</dbReference>
<dbReference type="InterPro" id="IPR002317">
    <property type="entry name" value="Ser-tRNA-ligase_type_1"/>
</dbReference>
<dbReference type="InterPro" id="IPR015866">
    <property type="entry name" value="Ser-tRNA-synth_1_N"/>
</dbReference>
<dbReference type="InterPro" id="IPR042103">
    <property type="entry name" value="SerRS_1_N_sf"/>
</dbReference>
<dbReference type="InterPro" id="IPR033729">
    <property type="entry name" value="SerRS_core"/>
</dbReference>
<dbReference type="InterPro" id="IPR010978">
    <property type="entry name" value="tRNA-bd_arm"/>
</dbReference>
<dbReference type="NCBIfam" id="TIGR00414">
    <property type="entry name" value="serS"/>
    <property type="match status" value="1"/>
</dbReference>
<dbReference type="PANTHER" id="PTHR43697:SF1">
    <property type="entry name" value="SERINE--TRNA LIGASE"/>
    <property type="match status" value="1"/>
</dbReference>
<dbReference type="PANTHER" id="PTHR43697">
    <property type="entry name" value="SERYL-TRNA SYNTHETASE"/>
    <property type="match status" value="1"/>
</dbReference>
<dbReference type="Pfam" id="PF02403">
    <property type="entry name" value="Seryl_tRNA_N"/>
    <property type="match status" value="1"/>
</dbReference>
<dbReference type="Pfam" id="PF00587">
    <property type="entry name" value="tRNA-synt_2b"/>
    <property type="match status" value="1"/>
</dbReference>
<dbReference type="PIRSF" id="PIRSF001529">
    <property type="entry name" value="Ser-tRNA-synth_IIa"/>
    <property type="match status" value="1"/>
</dbReference>
<dbReference type="PRINTS" id="PR00981">
    <property type="entry name" value="TRNASYNTHSER"/>
</dbReference>
<dbReference type="SUPFAM" id="SSF55681">
    <property type="entry name" value="Class II aaRS and biotin synthetases"/>
    <property type="match status" value="1"/>
</dbReference>
<dbReference type="SUPFAM" id="SSF46589">
    <property type="entry name" value="tRNA-binding arm"/>
    <property type="match status" value="1"/>
</dbReference>
<dbReference type="PROSITE" id="PS50862">
    <property type="entry name" value="AA_TRNA_LIGASE_II"/>
    <property type="match status" value="1"/>
</dbReference>
<protein>
    <recommendedName>
        <fullName evidence="1">Serine--tRNA ligase</fullName>
        <ecNumber evidence="1">6.1.1.11</ecNumber>
    </recommendedName>
    <alternativeName>
        <fullName evidence="1">Seryl-tRNA synthetase</fullName>
        <shortName evidence="1">SerRS</shortName>
    </alternativeName>
    <alternativeName>
        <fullName evidence="1">Seryl-tRNA(Ser/Sec) synthetase</fullName>
    </alternativeName>
</protein>
<gene>
    <name evidence="1" type="primary">serS</name>
    <name type="ordered locus">Gura_0287</name>
</gene>
<comment type="function">
    <text evidence="1">Catalyzes the attachment of serine to tRNA(Ser). Is also able to aminoacylate tRNA(Sec) with serine, to form the misacylated tRNA L-seryl-tRNA(Sec), which will be further converted into selenocysteinyl-tRNA(Sec).</text>
</comment>
<comment type="catalytic activity">
    <reaction evidence="1">
        <text>tRNA(Ser) + L-serine + ATP = L-seryl-tRNA(Ser) + AMP + diphosphate + H(+)</text>
        <dbReference type="Rhea" id="RHEA:12292"/>
        <dbReference type="Rhea" id="RHEA-COMP:9669"/>
        <dbReference type="Rhea" id="RHEA-COMP:9703"/>
        <dbReference type="ChEBI" id="CHEBI:15378"/>
        <dbReference type="ChEBI" id="CHEBI:30616"/>
        <dbReference type="ChEBI" id="CHEBI:33019"/>
        <dbReference type="ChEBI" id="CHEBI:33384"/>
        <dbReference type="ChEBI" id="CHEBI:78442"/>
        <dbReference type="ChEBI" id="CHEBI:78533"/>
        <dbReference type="ChEBI" id="CHEBI:456215"/>
        <dbReference type="EC" id="6.1.1.11"/>
    </reaction>
</comment>
<comment type="catalytic activity">
    <reaction evidence="1">
        <text>tRNA(Sec) + L-serine + ATP = L-seryl-tRNA(Sec) + AMP + diphosphate + H(+)</text>
        <dbReference type="Rhea" id="RHEA:42580"/>
        <dbReference type="Rhea" id="RHEA-COMP:9742"/>
        <dbReference type="Rhea" id="RHEA-COMP:10128"/>
        <dbReference type="ChEBI" id="CHEBI:15378"/>
        <dbReference type="ChEBI" id="CHEBI:30616"/>
        <dbReference type="ChEBI" id="CHEBI:33019"/>
        <dbReference type="ChEBI" id="CHEBI:33384"/>
        <dbReference type="ChEBI" id="CHEBI:78442"/>
        <dbReference type="ChEBI" id="CHEBI:78533"/>
        <dbReference type="ChEBI" id="CHEBI:456215"/>
        <dbReference type="EC" id="6.1.1.11"/>
    </reaction>
</comment>
<comment type="pathway">
    <text evidence="1">Aminoacyl-tRNA biosynthesis; selenocysteinyl-tRNA(Sec) biosynthesis; L-seryl-tRNA(Sec) from L-serine and tRNA(Sec): step 1/1.</text>
</comment>
<comment type="subunit">
    <text evidence="1">Homodimer. The tRNA molecule binds across the dimer.</text>
</comment>
<comment type="subcellular location">
    <subcellularLocation>
        <location evidence="1">Cytoplasm</location>
    </subcellularLocation>
</comment>
<comment type="domain">
    <text evidence="1">Consists of two distinct domains, a catalytic core and a N-terminal extension that is involved in tRNA binding.</text>
</comment>
<comment type="similarity">
    <text evidence="1">Belongs to the class-II aminoacyl-tRNA synthetase family. Type-1 seryl-tRNA synthetase subfamily.</text>
</comment>
<name>SYS_GEOUR</name>